<gene>
    <name evidence="1" type="primary">atpE</name>
    <name type="ordered locus">APP7_1713</name>
</gene>
<protein>
    <recommendedName>
        <fullName evidence="1">ATP synthase subunit c</fullName>
    </recommendedName>
    <alternativeName>
        <fullName evidence="1">ATP synthase F(0) sector subunit c</fullName>
    </alternativeName>
    <alternativeName>
        <fullName evidence="1">F-type ATPase subunit c</fullName>
        <shortName evidence="1">F-ATPase subunit c</shortName>
    </alternativeName>
    <alternativeName>
        <fullName evidence="1">Lipid-binding protein</fullName>
    </alternativeName>
</protein>
<accession>B3H2P8</accession>
<name>ATPL_ACTP7</name>
<evidence type="ECO:0000255" key="1">
    <source>
        <dbReference type="HAMAP-Rule" id="MF_01396"/>
    </source>
</evidence>
<sequence length="84" mass="8699">MESVITATIIGASILLAFAALGTAIGFAILGGKFLESSARQPELASSLQTKMFIVAGLLDAIAMIAVGISLLFIFANPFIDLLK</sequence>
<reference key="1">
    <citation type="submission" date="2008-06" db="EMBL/GenBank/DDBJ databases">
        <title>Genome and proteome analysis of A. pleuropneumoniae serotype 7.</title>
        <authorList>
            <person name="Linke B."/>
            <person name="Buettner F."/>
            <person name="Martinez-Arias R."/>
            <person name="Goesmann A."/>
            <person name="Baltes N."/>
            <person name="Tegetmeyer H."/>
            <person name="Singh M."/>
            <person name="Gerlach G.F."/>
        </authorList>
    </citation>
    <scope>NUCLEOTIDE SEQUENCE [LARGE SCALE GENOMIC DNA]</scope>
    <source>
        <strain>AP76</strain>
    </source>
</reference>
<keyword id="KW-0066">ATP synthesis</keyword>
<keyword id="KW-0997">Cell inner membrane</keyword>
<keyword id="KW-1003">Cell membrane</keyword>
<keyword id="KW-0138">CF(0)</keyword>
<keyword id="KW-0375">Hydrogen ion transport</keyword>
<keyword id="KW-0406">Ion transport</keyword>
<keyword id="KW-0446">Lipid-binding</keyword>
<keyword id="KW-0472">Membrane</keyword>
<keyword id="KW-0812">Transmembrane</keyword>
<keyword id="KW-1133">Transmembrane helix</keyword>
<keyword id="KW-0813">Transport</keyword>
<organism>
    <name type="scientific">Actinobacillus pleuropneumoniae serotype 7 (strain AP76)</name>
    <dbReference type="NCBI Taxonomy" id="537457"/>
    <lineage>
        <taxon>Bacteria</taxon>
        <taxon>Pseudomonadati</taxon>
        <taxon>Pseudomonadota</taxon>
        <taxon>Gammaproteobacteria</taxon>
        <taxon>Pasteurellales</taxon>
        <taxon>Pasteurellaceae</taxon>
        <taxon>Actinobacillus</taxon>
    </lineage>
</organism>
<dbReference type="EMBL" id="CP001091">
    <property type="protein sequence ID" value="ACE62365.1"/>
    <property type="molecule type" value="Genomic_DNA"/>
</dbReference>
<dbReference type="RefSeq" id="WP_005599073.1">
    <property type="nucleotide sequence ID" value="NC_010939.1"/>
</dbReference>
<dbReference type="SMR" id="B3H2P8"/>
<dbReference type="GeneID" id="92743777"/>
<dbReference type="KEGG" id="apa:APP7_1713"/>
<dbReference type="HOGENOM" id="CLU_148047_1_0_6"/>
<dbReference type="Proteomes" id="UP000001226">
    <property type="component" value="Chromosome"/>
</dbReference>
<dbReference type="GO" id="GO:0005886">
    <property type="term" value="C:plasma membrane"/>
    <property type="evidence" value="ECO:0007669"/>
    <property type="project" value="UniProtKB-SubCell"/>
</dbReference>
<dbReference type="GO" id="GO:0045259">
    <property type="term" value="C:proton-transporting ATP synthase complex"/>
    <property type="evidence" value="ECO:0007669"/>
    <property type="project" value="UniProtKB-KW"/>
</dbReference>
<dbReference type="GO" id="GO:0033177">
    <property type="term" value="C:proton-transporting two-sector ATPase complex, proton-transporting domain"/>
    <property type="evidence" value="ECO:0007669"/>
    <property type="project" value="InterPro"/>
</dbReference>
<dbReference type="GO" id="GO:0008289">
    <property type="term" value="F:lipid binding"/>
    <property type="evidence" value="ECO:0007669"/>
    <property type="project" value="UniProtKB-KW"/>
</dbReference>
<dbReference type="GO" id="GO:0046933">
    <property type="term" value="F:proton-transporting ATP synthase activity, rotational mechanism"/>
    <property type="evidence" value="ECO:0007669"/>
    <property type="project" value="UniProtKB-UniRule"/>
</dbReference>
<dbReference type="CDD" id="cd18185">
    <property type="entry name" value="ATP-synt_Fo_c_ATPE"/>
    <property type="match status" value="1"/>
</dbReference>
<dbReference type="FunFam" id="1.20.20.10:FF:000002">
    <property type="entry name" value="ATP synthase subunit c"/>
    <property type="match status" value="1"/>
</dbReference>
<dbReference type="Gene3D" id="1.20.20.10">
    <property type="entry name" value="F1F0 ATP synthase subunit C"/>
    <property type="match status" value="1"/>
</dbReference>
<dbReference type="HAMAP" id="MF_01396">
    <property type="entry name" value="ATP_synth_c_bact"/>
    <property type="match status" value="1"/>
</dbReference>
<dbReference type="InterPro" id="IPR005953">
    <property type="entry name" value="ATP_synth_csu_bac/chlpt"/>
</dbReference>
<dbReference type="InterPro" id="IPR000454">
    <property type="entry name" value="ATP_synth_F0_csu"/>
</dbReference>
<dbReference type="InterPro" id="IPR020537">
    <property type="entry name" value="ATP_synth_F0_csu_DDCD_BS"/>
</dbReference>
<dbReference type="InterPro" id="IPR038662">
    <property type="entry name" value="ATP_synth_F0_csu_sf"/>
</dbReference>
<dbReference type="InterPro" id="IPR002379">
    <property type="entry name" value="ATPase_proteolipid_c-like_dom"/>
</dbReference>
<dbReference type="InterPro" id="IPR035921">
    <property type="entry name" value="F/V-ATP_Csub_sf"/>
</dbReference>
<dbReference type="NCBIfam" id="TIGR01260">
    <property type="entry name" value="ATP_synt_c"/>
    <property type="match status" value="1"/>
</dbReference>
<dbReference type="NCBIfam" id="NF005363">
    <property type="entry name" value="PRK06876.1"/>
    <property type="match status" value="1"/>
</dbReference>
<dbReference type="Pfam" id="PF00137">
    <property type="entry name" value="ATP-synt_C"/>
    <property type="match status" value="1"/>
</dbReference>
<dbReference type="PRINTS" id="PR00124">
    <property type="entry name" value="ATPASEC"/>
</dbReference>
<dbReference type="SUPFAM" id="SSF81333">
    <property type="entry name" value="F1F0 ATP synthase subunit C"/>
    <property type="match status" value="1"/>
</dbReference>
<dbReference type="PROSITE" id="PS00605">
    <property type="entry name" value="ATPASE_C"/>
    <property type="match status" value="1"/>
</dbReference>
<proteinExistence type="inferred from homology"/>
<feature type="chain" id="PRO_1000184311" description="ATP synthase subunit c">
    <location>
        <begin position="1"/>
        <end position="84"/>
    </location>
</feature>
<feature type="transmembrane region" description="Helical" evidence="1">
    <location>
        <begin position="9"/>
        <end position="29"/>
    </location>
</feature>
<feature type="transmembrane region" description="Helical" evidence="1">
    <location>
        <begin position="54"/>
        <end position="74"/>
    </location>
</feature>
<feature type="site" description="Reversibly protonated during proton transport" evidence="1">
    <location>
        <position position="60"/>
    </location>
</feature>
<comment type="function">
    <text evidence="1">F(1)F(0) ATP synthase produces ATP from ADP in the presence of a proton or sodium gradient. F-type ATPases consist of two structural domains, F(1) containing the extramembraneous catalytic core and F(0) containing the membrane proton channel, linked together by a central stalk and a peripheral stalk. During catalysis, ATP synthesis in the catalytic domain of F(1) is coupled via a rotary mechanism of the central stalk subunits to proton translocation.</text>
</comment>
<comment type="function">
    <text evidence="1">Key component of the F(0) channel; it plays a direct role in translocation across the membrane. A homomeric c-ring of between 10-14 subunits forms the central stalk rotor element with the F(1) delta and epsilon subunits.</text>
</comment>
<comment type="subunit">
    <text evidence="1">F-type ATPases have 2 components, F(1) - the catalytic core - and F(0) - the membrane proton channel. F(1) has five subunits: alpha(3), beta(3), gamma(1), delta(1), epsilon(1). F(0) has three main subunits: a(1), b(2) and c(10-14). The alpha and beta chains form an alternating ring which encloses part of the gamma chain. F(1) is attached to F(0) by a central stalk formed by the gamma and epsilon chains, while a peripheral stalk is formed by the delta and b chains.</text>
</comment>
<comment type="subcellular location">
    <subcellularLocation>
        <location evidence="1">Cell inner membrane</location>
        <topology evidence="1">Multi-pass membrane protein</topology>
    </subcellularLocation>
</comment>
<comment type="similarity">
    <text evidence="1">Belongs to the ATPase C chain family.</text>
</comment>